<feature type="chain" id="PRO_1000076955" description="Thymidylate kinase">
    <location>
        <begin position="1"/>
        <end position="231"/>
    </location>
</feature>
<feature type="binding site" evidence="1">
    <location>
        <begin position="10"/>
        <end position="17"/>
    </location>
    <ligand>
        <name>ATP</name>
        <dbReference type="ChEBI" id="CHEBI:30616"/>
    </ligand>
</feature>
<protein>
    <recommendedName>
        <fullName evidence="1">Thymidylate kinase</fullName>
        <ecNumber evidence="1">2.7.4.9</ecNumber>
    </recommendedName>
    <alternativeName>
        <fullName evidence="1">dTMP kinase</fullName>
    </alternativeName>
</protein>
<reference key="1">
    <citation type="journal article" date="2008" name="Proc. Natl. Acad. Sci. U.S.A.">
        <title>Niche adaptation and genome expansion in the chlorophyll d-producing cyanobacterium Acaryochloris marina.</title>
        <authorList>
            <person name="Swingley W.D."/>
            <person name="Chen M."/>
            <person name="Cheung P.C."/>
            <person name="Conrad A.L."/>
            <person name="Dejesa L.C."/>
            <person name="Hao J."/>
            <person name="Honchak B.M."/>
            <person name="Karbach L.E."/>
            <person name="Kurdoglu A."/>
            <person name="Lahiri S."/>
            <person name="Mastrian S.D."/>
            <person name="Miyashita H."/>
            <person name="Page L."/>
            <person name="Ramakrishna P."/>
            <person name="Satoh S."/>
            <person name="Sattley W.M."/>
            <person name="Shimada Y."/>
            <person name="Taylor H.L."/>
            <person name="Tomo T."/>
            <person name="Tsuchiya T."/>
            <person name="Wang Z.T."/>
            <person name="Raymond J."/>
            <person name="Mimuro M."/>
            <person name="Blankenship R.E."/>
            <person name="Touchman J.W."/>
        </authorList>
    </citation>
    <scope>NUCLEOTIDE SEQUENCE [LARGE SCALE GENOMIC DNA]</scope>
    <source>
        <strain>MBIC 11017</strain>
    </source>
</reference>
<gene>
    <name evidence="1" type="primary">tmk</name>
    <name type="ordered locus">AM1_6041</name>
</gene>
<accession>B0C3N6</accession>
<sequence>MLGKFIVFEGGEGAGKTTQLNLVFEWLTGSGWTNRIKGYIQGDYPSVLTTREPGGTALGKSIRKLLLDVTATGNESIDERAELLLFAADRAQHVSSCLLPHLQQGALVLCDRYTDSTIAYQGYGRELDLTLIHQLNQIATQGLVSDLTFWLDIDPEFGLARTHDREQDPEIETDRMEANEIAFHQRLRQGFADLARQHPERIFRIEAHQSDDVVAQQIQGILESRLQEWYP</sequence>
<name>KTHY_ACAM1</name>
<organism>
    <name type="scientific">Acaryochloris marina (strain MBIC 11017)</name>
    <dbReference type="NCBI Taxonomy" id="329726"/>
    <lineage>
        <taxon>Bacteria</taxon>
        <taxon>Bacillati</taxon>
        <taxon>Cyanobacteriota</taxon>
        <taxon>Cyanophyceae</taxon>
        <taxon>Acaryochloridales</taxon>
        <taxon>Acaryochloridaceae</taxon>
        <taxon>Acaryochloris</taxon>
    </lineage>
</organism>
<keyword id="KW-0067">ATP-binding</keyword>
<keyword id="KW-0418">Kinase</keyword>
<keyword id="KW-0545">Nucleotide biosynthesis</keyword>
<keyword id="KW-0547">Nucleotide-binding</keyword>
<keyword id="KW-1185">Reference proteome</keyword>
<keyword id="KW-0808">Transferase</keyword>
<dbReference type="EC" id="2.7.4.9" evidence="1"/>
<dbReference type="EMBL" id="CP000828">
    <property type="protein sequence ID" value="ABW30973.1"/>
    <property type="molecule type" value="Genomic_DNA"/>
</dbReference>
<dbReference type="RefSeq" id="WP_012166172.1">
    <property type="nucleotide sequence ID" value="NC_009925.1"/>
</dbReference>
<dbReference type="SMR" id="B0C3N6"/>
<dbReference type="STRING" id="329726.AM1_6041"/>
<dbReference type="KEGG" id="amr:AM1_6041"/>
<dbReference type="eggNOG" id="COG0125">
    <property type="taxonomic scope" value="Bacteria"/>
</dbReference>
<dbReference type="HOGENOM" id="CLU_049131_0_0_3"/>
<dbReference type="OrthoDB" id="9774907at2"/>
<dbReference type="Proteomes" id="UP000000268">
    <property type="component" value="Chromosome"/>
</dbReference>
<dbReference type="GO" id="GO:0005829">
    <property type="term" value="C:cytosol"/>
    <property type="evidence" value="ECO:0007669"/>
    <property type="project" value="TreeGrafter"/>
</dbReference>
<dbReference type="GO" id="GO:0005524">
    <property type="term" value="F:ATP binding"/>
    <property type="evidence" value="ECO:0007669"/>
    <property type="project" value="UniProtKB-UniRule"/>
</dbReference>
<dbReference type="GO" id="GO:0004798">
    <property type="term" value="F:dTMP kinase activity"/>
    <property type="evidence" value="ECO:0007669"/>
    <property type="project" value="UniProtKB-UniRule"/>
</dbReference>
<dbReference type="GO" id="GO:0006233">
    <property type="term" value="P:dTDP biosynthetic process"/>
    <property type="evidence" value="ECO:0007669"/>
    <property type="project" value="InterPro"/>
</dbReference>
<dbReference type="GO" id="GO:0006235">
    <property type="term" value="P:dTTP biosynthetic process"/>
    <property type="evidence" value="ECO:0007669"/>
    <property type="project" value="UniProtKB-UniRule"/>
</dbReference>
<dbReference type="GO" id="GO:0006227">
    <property type="term" value="P:dUDP biosynthetic process"/>
    <property type="evidence" value="ECO:0007669"/>
    <property type="project" value="TreeGrafter"/>
</dbReference>
<dbReference type="CDD" id="cd01672">
    <property type="entry name" value="TMPK"/>
    <property type="match status" value="1"/>
</dbReference>
<dbReference type="FunFam" id="3.40.50.300:FF:000225">
    <property type="entry name" value="Thymidylate kinase"/>
    <property type="match status" value="1"/>
</dbReference>
<dbReference type="Gene3D" id="3.40.50.300">
    <property type="entry name" value="P-loop containing nucleotide triphosphate hydrolases"/>
    <property type="match status" value="1"/>
</dbReference>
<dbReference type="HAMAP" id="MF_00165">
    <property type="entry name" value="Thymidylate_kinase"/>
    <property type="match status" value="1"/>
</dbReference>
<dbReference type="InterPro" id="IPR027417">
    <property type="entry name" value="P-loop_NTPase"/>
</dbReference>
<dbReference type="InterPro" id="IPR039430">
    <property type="entry name" value="Thymidylate_kin-like_dom"/>
</dbReference>
<dbReference type="InterPro" id="IPR018095">
    <property type="entry name" value="Thymidylate_kin_CS"/>
</dbReference>
<dbReference type="InterPro" id="IPR018094">
    <property type="entry name" value="Thymidylate_kinase"/>
</dbReference>
<dbReference type="NCBIfam" id="TIGR00041">
    <property type="entry name" value="DTMP_kinase"/>
    <property type="match status" value="1"/>
</dbReference>
<dbReference type="PANTHER" id="PTHR10344">
    <property type="entry name" value="THYMIDYLATE KINASE"/>
    <property type="match status" value="1"/>
</dbReference>
<dbReference type="PANTHER" id="PTHR10344:SF4">
    <property type="entry name" value="UMP-CMP KINASE 2, MITOCHONDRIAL"/>
    <property type="match status" value="1"/>
</dbReference>
<dbReference type="Pfam" id="PF02223">
    <property type="entry name" value="Thymidylate_kin"/>
    <property type="match status" value="1"/>
</dbReference>
<dbReference type="SUPFAM" id="SSF52540">
    <property type="entry name" value="P-loop containing nucleoside triphosphate hydrolases"/>
    <property type="match status" value="1"/>
</dbReference>
<dbReference type="PROSITE" id="PS01331">
    <property type="entry name" value="THYMIDYLATE_KINASE"/>
    <property type="match status" value="1"/>
</dbReference>
<evidence type="ECO:0000255" key="1">
    <source>
        <dbReference type="HAMAP-Rule" id="MF_00165"/>
    </source>
</evidence>
<comment type="function">
    <text evidence="1">Phosphorylation of dTMP to form dTDP in both de novo and salvage pathways of dTTP synthesis.</text>
</comment>
<comment type="catalytic activity">
    <reaction evidence="1">
        <text>dTMP + ATP = dTDP + ADP</text>
        <dbReference type="Rhea" id="RHEA:13517"/>
        <dbReference type="ChEBI" id="CHEBI:30616"/>
        <dbReference type="ChEBI" id="CHEBI:58369"/>
        <dbReference type="ChEBI" id="CHEBI:63528"/>
        <dbReference type="ChEBI" id="CHEBI:456216"/>
        <dbReference type="EC" id="2.7.4.9"/>
    </reaction>
</comment>
<comment type="similarity">
    <text evidence="1">Belongs to the thymidylate kinase family.</text>
</comment>
<proteinExistence type="inferred from homology"/>